<accession>Q2GHF1</accession>
<sequence>MVGYILDDDLQEVDAEVFNCISGELNRQNSGLQLIASENFVSKAVLQAQGSIFTNKYAEGYPGKRYYCGCHFADIVENLAIERLCRLFGCKFANVQPHSGSQANQGVFAALLKPGDTVIGMSLDCGGHLTHGSAPSISGKWFNAVQYQVDRDTGLIDMDEIEKLAVEHNPSLIIAGSSSYPRVIDFKRFREIADKVGAYLLADIAHYAGLIAAGEFPSPVEYAHVITSTTHKTLRGPRGAVIMTNYEDIHKKIQSSIFPGMQGGPLMHVIAAKAVAFAEALKPEFKDYAKQIIKNSKALGEVFKERGLDLVTGGTDSHMVVLDLRSKSVTGKDAVLALEKLGIICNKNAIPFDPEKPFVTSGLRFGSAAETSRGLQESEFREIGSMVCDVIDSLKASDSVRLSVERDIIKRVKELTSNFI</sequence>
<evidence type="ECO:0000255" key="1">
    <source>
        <dbReference type="HAMAP-Rule" id="MF_00051"/>
    </source>
</evidence>
<gene>
    <name evidence="1" type="primary">glyA</name>
    <name type="ordered locus">ECH_0311</name>
</gene>
<dbReference type="EC" id="2.1.2.1" evidence="1"/>
<dbReference type="EMBL" id="CP000236">
    <property type="protein sequence ID" value="ABD44881.1"/>
    <property type="molecule type" value="Genomic_DNA"/>
</dbReference>
<dbReference type="RefSeq" id="WP_006011337.1">
    <property type="nucleotide sequence ID" value="NC_007799.1"/>
</dbReference>
<dbReference type="SMR" id="Q2GHF1"/>
<dbReference type="STRING" id="205920.ECH_0311"/>
<dbReference type="KEGG" id="ech:ECH_0311"/>
<dbReference type="eggNOG" id="COG0112">
    <property type="taxonomic scope" value="Bacteria"/>
</dbReference>
<dbReference type="HOGENOM" id="CLU_022477_2_1_5"/>
<dbReference type="OrthoDB" id="9803846at2"/>
<dbReference type="UniPathway" id="UPA00193"/>
<dbReference type="UniPathway" id="UPA00288">
    <property type="reaction ID" value="UER01023"/>
</dbReference>
<dbReference type="Proteomes" id="UP000008320">
    <property type="component" value="Chromosome"/>
</dbReference>
<dbReference type="GO" id="GO:0005829">
    <property type="term" value="C:cytosol"/>
    <property type="evidence" value="ECO:0007669"/>
    <property type="project" value="TreeGrafter"/>
</dbReference>
<dbReference type="GO" id="GO:0004372">
    <property type="term" value="F:glycine hydroxymethyltransferase activity"/>
    <property type="evidence" value="ECO:0007669"/>
    <property type="project" value="UniProtKB-UniRule"/>
</dbReference>
<dbReference type="GO" id="GO:0030170">
    <property type="term" value="F:pyridoxal phosphate binding"/>
    <property type="evidence" value="ECO:0007669"/>
    <property type="project" value="UniProtKB-UniRule"/>
</dbReference>
<dbReference type="GO" id="GO:0019264">
    <property type="term" value="P:glycine biosynthetic process from serine"/>
    <property type="evidence" value="ECO:0007669"/>
    <property type="project" value="UniProtKB-UniRule"/>
</dbReference>
<dbReference type="GO" id="GO:0035999">
    <property type="term" value="P:tetrahydrofolate interconversion"/>
    <property type="evidence" value="ECO:0007669"/>
    <property type="project" value="UniProtKB-UniRule"/>
</dbReference>
<dbReference type="CDD" id="cd00378">
    <property type="entry name" value="SHMT"/>
    <property type="match status" value="1"/>
</dbReference>
<dbReference type="FunFam" id="3.40.640.10:FF:000001">
    <property type="entry name" value="Serine hydroxymethyltransferase"/>
    <property type="match status" value="1"/>
</dbReference>
<dbReference type="Gene3D" id="3.90.1150.10">
    <property type="entry name" value="Aspartate Aminotransferase, domain 1"/>
    <property type="match status" value="1"/>
</dbReference>
<dbReference type="Gene3D" id="3.40.640.10">
    <property type="entry name" value="Type I PLP-dependent aspartate aminotransferase-like (Major domain)"/>
    <property type="match status" value="1"/>
</dbReference>
<dbReference type="HAMAP" id="MF_00051">
    <property type="entry name" value="SHMT"/>
    <property type="match status" value="1"/>
</dbReference>
<dbReference type="InterPro" id="IPR015424">
    <property type="entry name" value="PyrdxlP-dep_Trfase"/>
</dbReference>
<dbReference type="InterPro" id="IPR015421">
    <property type="entry name" value="PyrdxlP-dep_Trfase_major"/>
</dbReference>
<dbReference type="InterPro" id="IPR015422">
    <property type="entry name" value="PyrdxlP-dep_Trfase_small"/>
</dbReference>
<dbReference type="InterPro" id="IPR001085">
    <property type="entry name" value="Ser_HO-MeTrfase"/>
</dbReference>
<dbReference type="InterPro" id="IPR049943">
    <property type="entry name" value="Ser_HO-MeTrfase-like"/>
</dbReference>
<dbReference type="InterPro" id="IPR019798">
    <property type="entry name" value="Ser_HO-MeTrfase_PLP_BS"/>
</dbReference>
<dbReference type="InterPro" id="IPR039429">
    <property type="entry name" value="SHMT-like_dom"/>
</dbReference>
<dbReference type="NCBIfam" id="NF000586">
    <property type="entry name" value="PRK00011.1"/>
    <property type="match status" value="1"/>
</dbReference>
<dbReference type="PANTHER" id="PTHR11680">
    <property type="entry name" value="SERINE HYDROXYMETHYLTRANSFERASE"/>
    <property type="match status" value="1"/>
</dbReference>
<dbReference type="PANTHER" id="PTHR11680:SF35">
    <property type="entry name" value="SERINE HYDROXYMETHYLTRANSFERASE 1"/>
    <property type="match status" value="1"/>
</dbReference>
<dbReference type="Pfam" id="PF00464">
    <property type="entry name" value="SHMT"/>
    <property type="match status" value="1"/>
</dbReference>
<dbReference type="PIRSF" id="PIRSF000412">
    <property type="entry name" value="SHMT"/>
    <property type="match status" value="1"/>
</dbReference>
<dbReference type="SUPFAM" id="SSF53383">
    <property type="entry name" value="PLP-dependent transferases"/>
    <property type="match status" value="1"/>
</dbReference>
<dbReference type="PROSITE" id="PS00096">
    <property type="entry name" value="SHMT"/>
    <property type="match status" value="1"/>
</dbReference>
<proteinExistence type="inferred from homology"/>
<organism>
    <name type="scientific">Ehrlichia chaffeensis (strain ATCC CRL-10679 / Arkansas)</name>
    <dbReference type="NCBI Taxonomy" id="205920"/>
    <lineage>
        <taxon>Bacteria</taxon>
        <taxon>Pseudomonadati</taxon>
        <taxon>Pseudomonadota</taxon>
        <taxon>Alphaproteobacteria</taxon>
        <taxon>Rickettsiales</taxon>
        <taxon>Anaplasmataceae</taxon>
        <taxon>Ehrlichia</taxon>
    </lineage>
</organism>
<feature type="chain" id="PRO_1000006247" description="Serine hydroxymethyltransferase">
    <location>
        <begin position="1"/>
        <end position="420"/>
    </location>
</feature>
<feature type="binding site" evidence="1">
    <location>
        <position position="123"/>
    </location>
    <ligand>
        <name>(6S)-5,6,7,8-tetrahydrofolate</name>
        <dbReference type="ChEBI" id="CHEBI:57453"/>
    </ligand>
</feature>
<feature type="binding site" evidence="1">
    <location>
        <begin position="127"/>
        <end position="129"/>
    </location>
    <ligand>
        <name>(6S)-5,6,7,8-tetrahydrofolate</name>
        <dbReference type="ChEBI" id="CHEBI:57453"/>
    </ligand>
</feature>
<feature type="site" description="Plays an important role in substrate specificity" evidence="1">
    <location>
        <position position="231"/>
    </location>
</feature>
<feature type="modified residue" description="N6-(pyridoxal phosphate)lysine" evidence="1">
    <location>
        <position position="232"/>
    </location>
</feature>
<keyword id="KW-0028">Amino-acid biosynthesis</keyword>
<keyword id="KW-0963">Cytoplasm</keyword>
<keyword id="KW-0554">One-carbon metabolism</keyword>
<keyword id="KW-0663">Pyridoxal phosphate</keyword>
<keyword id="KW-1185">Reference proteome</keyword>
<keyword id="KW-0808">Transferase</keyword>
<protein>
    <recommendedName>
        <fullName evidence="1">Serine hydroxymethyltransferase</fullName>
        <shortName evidence="1">SHMT</shortName>
        <shortName evidence="1">Serine methylase</shortName>
        <ecNumber evidence="1">2.1.2.1</ecNumber>
    </recommendedName>
</protein>
<comment type="function">
    <text evidence="1">Catalyzes the reversible interconversion of serine and glycine with tetrahydrofolate (THF) serving as the one-carbon carrier. This reaction serves as the major source of one-carbon groups required for the biosynthesis of purines, thymidylate, methionine, and other important biomolecules. Also exhibits THF-independent aldolase activity toward beta-hydroxyamino acids, producing glycine and aldehydes, via a retro-aldol mechanism.</text>
</comment>
<comment type="catalytic activity">
    <reaction evidence="1">
        <text>(6R)-5,10-methylene-5,6,7,8-tetrahydrofolate + glycine + H2O = (6S)-5,6,7,8-tetrahydrofolate + L-serine</text>
        <dbReference type="Rhea" id="RHEA:15481"/>
        <dbReference type="ChEBI" id="CHEBI:15377"/>
        <dbReference type="ChEBI" id="CHEBI:15636"/>
        <dbReference type="ChEBI" id="CHEBI:33384"/>
        <dbReference type="ChEBI" id="CHEBI:57305"/>
        <dbReference type="ChEBI" id="CHEBI:57453"/>
        <dbReference type="EC" id="2.1.2.1"/>
    </reaction>
</comment>
<comment type="cofactor">
    <cofactor evidence="1">
        <name>pyridoxal 5'-phosphate</name>
        <dbReference type="ChEBI" id="CHEBI:597326"/>
    </cofactor>
</comment>
<comment type="pathway">
    <text evidence="1">One-carbon metabolism; tetrahydrofolate interconversion.</text>
</comment>
<comment type="pathway">
    <text evidence="1">Amino-acid biosynthesis; glycine biosynthesis; glycine from L-serine: step 1/1.</text>
</comment>
<comment type="subunit">
    <text evidence="1">Homodimer.</text>
</comment>
<comment type="subcellular location">
    <subcellularLocation>
        <location evidence="1">Cytoplasm</location>
    </subcellularLocation>
</comment>
<comment type="similarity">
    <text evidence="1">Belongs to the SHMT family.</text>
</comment>
<name>GLYA_EHRCR</name>
<reference key="1">
    <citation type="journal article" date="2006" name="PLoS Genet.">
        <title>Comparative genomics of emerging human ehrlichiosis agents.</title>
        <authorList>
            <person name="Dunning Hotopp J.C."/>
            <person name="Lin M."/>
            <person name="Madupu R."/>
            <person name="Crabtree J."/>
            <person name="Angiuoli S.V."/>
            <person name="Eisen J.A."/>
            <person name="Seshadri R."/>
            <person name="Ren Q."/>
            <person name="Wu M."/>
            <person name="Utterback T.R."/>
            <person name="Smith S."/>
            <person name="Lewis M."/>
            <person name="Khouri H."/>
            <person name="Zhang C."/>
            <person name="Niu H."/>
            <person name="Lin Q."/>
            <person name="Ohashi N."/>
            <person name="Zhi N."/>
            <person name="Nelson W.C."/>
            <person name="Brinkac L.M."/>
            <person name="Dodson R.J."/>
            <person name="Rosovitz M.J."/>
            <person name="Sundaram J.P."/>
            <person name="Daugherty S.C."/>
            <person name="Davidsen T."/>
            <person name="Durkin A.S."/>
            <person name="Gwinn M.L."/>
            <person name="Haft D.H."/>
            <person name="Selengut J.D."/>
            <person name="Sullivan S.A."/>
            <person name="Zafar N."/>
            <person name="Zhou L."/>
            <person name="Benahmed F."/>
            <person name="Forberger H."/>
            <person name="Halpin R."/>
            <person name="Mulligan S."/>
            <person name="Robinson J."/>
            <person name="White O."/>
            <person name="Rikihisa Y."/>
            <person name="Tettelin H."/>
        </authorList>
    </citation>
    <scope>NUCLEOTIDE SEQUENCE [LARGE SCALE GENOMIC DNA]</scope>
    <source>
        <strain>ATCC CRL-10679 / Arkansas</strain>
    </source>
</reference>